<protein>
    <recommendedName>
        <fullName evidence="1">Ribonuclease P protein component</fullName>
        <shortName evidence="1">RNase P protein</shortName>
        <shortName evidence="1">RNaseP protein</shortName>
        <ecNumber evidence="1">3.1.26.5</ecNumber>
    </recommendedName>
    <alternativeName>
        <fullName evidence="1">Protein C5</fullName>
    </alternativeName>
</protein>
<organism>
    <name type="scientific">Shigella boydii serotype 18 (strain CDC 3083-94 / BS512)</name>
    <dbReference type="NCBI Taxonomy" id="344609"/>
    <lineage>
        <taxon>Bacteria</taxon>
        <taxon>Pseudomonadati</taxon>
        <taxon>Pseudomonadota</taxon>
        <taxon>Gammaproteobacteria</taxon>
        <taxon>Enterobacterales</taxon>
        <taxon>Enterobacteriaceae</taxon>
        <taxon>Shigella</taxon>
    </lineage>
</organism>
<sequence length="119" mass="13789">MVKLAFPRELRLLTPSQFTFVFQQPQRAGTPQITILGRLNSLGHPRIGLTVAKKNVRRAHERNRIKRLTRESFRLRQHELPAMDFVVVAKKGVADLDNRALSEALEKLWRRHCRLARGS</sequence>
<proteinExistence type="inferred from homology"/>
<accession>B2TUS4</accession>
<comment type="function">
    <text evidence="1">RNaseP catalyzes the removal of the 5'-leader sequence from pre-tRNA to produce the mature 5'-terminus. It can also cleave other RNA substrates such as 4.5S RNA. The protein component plays an auxiliary but essential role in vivo by binding to the 5'-leader sequence and broadening the substrate specificity of the ribozyme.</text>
</comment>
<comment type="catalytic activity">
    <reaction evidence="1">
        <text>Endonucleolytic cleavage of RNA, removing 5'-extranucleotides from tRNA precursor.</text>
        <dbReference type="EC" id="3.1.26.5"/>
    </reaction>
</comment>
<comment type="subunit">
    <text evidence="1">Consists of a catalytic RNA component (M1 or rnpB) and a protein subunit.</text>
</comment>
<comment type="similarity">
    <text evidence="1">Belongs to the RnpA family.</text>
</comment>
<gene>
    <name evidence="1" type="primary">rnpA</name>
    <name type="ordered locus">SbBS512_E4221</name>
</gene>
<dbReference type="EC" id="3.1.26.5" evidence="1"/>
<dbReference type="EMBL" id="CP001063">
    <property type="protein sequence ID" value="ACD07324.1"/>
    <property type="molecule type" value="Genomic_DNA"/>
</dbReference>
<dbReference type="RefSeq" id="WP_000239730.1">
    <property type="nucleotide sequence ID" value="NC_010658.1"/>
</dbReference>
<dbReference type="SMR" id="B2TUS4"/>
<dbReference type="STRING" id="344609.SbBS512_E4221"/>
<dbReference type="GeneID" id="93778446"/>
<dbReference type="KEGG" id="sbc:SbBS512_E4221"/>
<dbReference type="HOGENOM" id="CLU_117179_11_0_6"/>
<dbReference type="Proteomes" id="UP000001030">
    <property type="component" value="Chromosome"/>
</dbReference>
<dbReference type="GO" id="GO:0030677">
    <property type="term" value="C:ribonuclease P complex"/>
    <property type="evidence" value="ECO:0007669"/>
    <property type="project" value="TreeGrafter"/>
</dbReference>
<dbReference type="GO" id="GO:0042781">
    <property type="term" value="F:3'-tRNA processing endoribonuclease activity"/>
    <property type="evidence" value="ECO:0007669"/>
    <property type="project" value="TreeGrafter"/>
</dbReference>
<dbReference type="GO" id="GO:0004526">
    <property type="term" value="F:ribonuclease P activity"/>
    <property type="evidence" value="ECO:0007669"/>
    <property type="project" value="UniProtKB-UniRule"/>
</dbReference>
<dbReference type="GO" id="GO:0000049">
    <property type="term" value="F:tRNA binding"/>
    <property type="evidence" value="ECO:0007669"/>
    <property type="project" value="UniProtKB-UniRule"/>
</dbReference>
<dbReference type="GO" id="GO:0001682">
    <property type="term" value="P:tRNA 5'-leader removal"/>
    <property type="evidence" value="ECO:0007669"/>
    <property type="project" value="UniProtKB-UniRule"/>
</dbReference>
<dbReference type="FunFam" id="3.30.230.10:FF:000016">
    <property type="entry name" value="Ribonuclease P protein component"/>
    <property type="match status" value="1"/>
</dbReference>
<dbReference type="Gene3D" id="3.30.230.10">
    <property type="match status" value="1"/>
</dbReference>
<dbReference type="HAMAP" id="MF_00227">
    <property type="entry name" value="RNase_P"/>
    <property type="match status" value="1"/>
</dbReference>
<dbReference type="InterPro" id="IPR020568">
    <property type="entry name" value="Ribosomal_Su5_D2-typ_SF"/>
</dbReference>
<dbReference type="InterPro" id="IPR014721">
    <property type="entry name" value="Ribsml_uS5_D2-typ_fold_subgr"/>
</dbReference>
<dbReference type="InterPro" id="IPR000100">
    <property type="entry name" value="RNase_P"/>
</dbReference>
<dbReference type="InterPro" id="IPR020539">
    <property type="entry name" value="RNase_P_CS"/>
</dbReference>
<dbReference type="NCBIfam" id="TIGR00188">
    <property type="entry name" value="rnpA"/>
    <property type="match status" value="1"/>
</dbReference>
<dbReference type="PANTHER" id="PTHR33992">
    <property type="entry name" value="RIBONUCLEASE P PROTEIN COMPONENT"/>
    <property type="match status" value="1"/>
</dbReference>
<dbReference type="PANTHER" id="PTHR33992:SF1">
    <property type="entry name" value="RIBONUCLEASE P PROTEIN COMPONENT"/>
    <property type="match status" value="1"/>
</dbReference>
<dbReference type="Pfam" id="PF00825">
    <property type="entry name" value="Ribonuclease_P"/>
    <property type="match status" value="1"/>
</dbReference>
<dbReference type="SUPFAM" id="SSF54211">
    <property type="entry name" value="Ribosomal protein S5 domain 2-like"/>
    <property type="match status" value="1"/>
</dbReference>
<dbReference type="PROSITE" id="PS00648">
    <property type="entry name" value="RIBONUCLEASE_P"/>
    <property type="match status" value="1"/>
</dbReference>
<name>RNPA_SHIB3</name>
<reference key="1">
    <citation type="submission" date="2008-05" db="EMBL/GenBank/DDBJ databases">
        <title>Complete sequence of Shigella boydii serotype 18 strain BS512.</title>
        <authorList>
            <person name="Rasko D.A."/>
            <person name="Rosovitz M."/>
            <person name="Maurelli A.T."/>
            <person name="Myers G."/>
            <person name="Seshadri R."/>
            <person name="Cer R."/>
            <person name="Jiang L."/>
            <person name="Ravel J."/>
            <person name="Sebastian Y."/>
        </authorList>
    </citation>
    <scope>NUCLEOTIDE SEQUENCE [LARGE SCALE GENOMIC DNA]</scope>
    <source>
        <strain>CDC 3083-94 / BS512</strain>
    </source>
</reference>
<evidence type="ECO:0000255" key="1">
    <source>
        <dbReference type="HAMAP-Rule" id="MF_00227"/>
    </source>
</evidence>
<keyword id="KW-0255">Endonuclease</keyword>
<keyword id="KW-0378">Hydrolase</keyword>
<keyword id="KW-0540">Nuclease</keyword>
<keyword id="KW-1185">Reference proteome</keyword>
<keyword id="KW-0694">RNA-binding</keyword>
<keyword id="KW-0819">tRNA processing</keyword>
<feature type="chain" id="PRO_1000100393" description="Ribonuclease P protein component">
    <location>
        <begin position="1"/>
        <end position="119"/>
    </location>
</feature>